<feature type="chain" id="PRO_0000169707" description="Putative inorganic phosphate export protein YjbB">
    <location>
        <begin position="1"/>
        <end position="543"/>
    </location>
</feature>
<feature type="transmembrane region" description="Helical" evidence="1">
    <location>
        <begin position="1"/>
        <end position="21"/>
    </location>
</feature>
<feature type="transmembrane region" description="Helical" evidence="1">
    <location>
        <begin position="48"/>
        <end position="68"/>
    </location>
</feature>
<feature type="transmembrane region" description="Helical" evidence="1">
    <location>
        <begin position="76"/>
        <end position="96"/>
    </location>
</feature>
<feature type="transmembrane region" description="Helical" evidence="1">
    <location>
        <begin position="99"/>
        <end position="119"/>
    </location>
</feature>
<feature type="transmembrane region" description="Helical" evidence="1">
    <location>
        <begin position="134"/>
        <end position="154"/>
    </location>
</feature>
<feature type="transmembrane region" description="Helical" evidence="1">
    <location>
        <begin position="175"/>
        <end position="195"/>
    </location>
</feature>
<feature type="transmembrane region" description="Helical" evidence="1">
    <location>
        <begin position="196"/>
        <end position="216"/>
    </location>
</feature>
<feature type="transmembrane region" description="Helical" evidence="1">
    <location>
        <begin position="240"/>
        <end position="260"/>
    </location>
</feature>
<feature type="transmembrane region" description="Helical" evidence="1">
    <location>
        <begin position="274"/>
        <end position="294"/>
    </location>
</feature>
<sequence length="543" mass="59467">MLTLLHLLSAVALLVWGTHIVRTGVMRVFGARLRTVLSRSVEKKPLAFCAGIGVTALVQSSNATTMLVTSFVAQDLVALAPALVIVLGADVGTALMARILTFDLSWLSPLLIFIGVIFFLGRKQSRAGQLGRVGIGLGLILLALELIVQAVTPITQANGVQVIFASLTGDILLDALIGAMFAIISYSSLAAVLLTATLTAAGIISFPVALCLVIGANLGSGLLAMLNNSAANAAARRVALGSLLFKLVGSLIILPFVHLLAETMGKLSLPKAELVIYFHVFYNLVRCLVMLPFVDPMARFCKTIIRDEPELDTQLRPKHLDVSALDTPTLALANAARETLRIGDAMEQMMEGLNKVMHGEPRQEKELRKLADDINVLYTAIKLYLARMPKEELAEEESRRWAEIIEMSLNLEQASDIVERMGSEIADKSLAARRAFSLDGLKELDALYEQLLSNLKLAMSVFFSGDVTSARRLRRSKHRFRILNRRYSHAHVDRLHQQNVQSIETSSLHLGLLGDMQRLNSLFCSVAYSVLEQPDEDEGRDEY</sequence>
<accession>P0AF43</accession>
<accession>P32683</accession>
<accession>Q2M6T4</accession>
<gene>
    <name type="primary">yjbB</name>
    <name type="ordered locus">b4020</name>
    <name type="ordered locus">JW3980</name>
</gene>
<comment type="function">
    <text evidence="2">Might be involved in phosphate export (PubMed:21488939). Overproduction of YjbB reduces the elevated levels of polyphosphate (polyP) in a phoU mutant that accumulates 1000-fold higher levels of polyP than the wild type, suggesting that YjbB exports excess intracellular phosphate (Pi) in the phoU mutant and thus reduces the levels of polyP (PubMed:21488939).</text>
</comment>
<comment type="catalytic activity">
    <reaction evidence="4">
        <text>phosphate(in) = phosphate(out)</text>
        <dbReference type="Rhea" id="RHEA:32823"/>
        <dbReference type="ChEBI" id="CHEBI:43474"/>
    </reaction>
</comment>
<comment type="subcellular location">
    <subcellularLocation>
        <location evidence="3">Cell inner membrane</location>
        <topology evidence="1">Multi-pass membrane protein</topology>
    </subcellularLocation>
</comment>
<comment type="similarity">
    <text evidence="3">Belongs to the YjbB family.</text>
</comment>
<proteinExistence type="inferred from homology"/>
<dbReference type="EMBL" id="U00006">
    <property type="protein sequence ID" value="AAC43114.1"/>
    <property type="molecule type" value="Genomic_DNA"/>
</dbReference>
<dbReference type="EMBL" id="U00096">
    <property type="protein sequence ID" value="AAC76990.1"/>
    <property type="molecule type" value="Genomic_DNA"/>
</dbReference>
<dbReference type="EMBL" id="AP009048">
    <property type="protein sequence ID" value="BAE78022.1"/>
    <property type="molecule type" value="Genomic_DNA"/>
</dbReference>
<dbReference type="PIR" id="C65209">
    <property type="entry name" value="C65209"/>
</dbReference>
<dbReference type="RefSeq" id="NP_418444.1">
    <property type="nucleotide sequence ID" value="NC_000913.3"/>
</dbReference>
<dbReference type="RefSeq" id="WP_000956830.1">
    <property type="nucleotide sequence ID" value="NZ_STEB01000022.1"/>
</dbReference>
<dbReference type="SMR" id="P0AF43"/>
<dbReference type="BioGRID" id="4262654">
    <property type="interactions" value="40"/>
</dbReference>
<dbReference type="FunCoup" id="P0AF43">
    <property type="interactions" value="104"/>
</dbReference>
<dbReference type="STRING" id="511145.b4020"/>
<dbReference type="TCDB" id="2.A.58.2.1">
    <property type="family name" value="the phosphate:na(+) symporter (pnas) family"/>
</dbReference>
<dbReference type="jPOST" id="P0AF43"/>
<dbReference type="PaxDb" id="511145-b4020"/>
<dbReference type="DNASU" id="948521"/>
<dbReference type="EnsemblBacteria" id="AAC76990">
    <property type="protein sequence ID" value="AAC76990"/>
    <property type="gene ID" value="b4020"/>
</dbReference>
<dbReference type="GeneID" id="948521"/>
<dbReference type="KEGG" id="ecj:JW3980"/>
<dbReference type="KEGG" id="eco:b4020"/>
<dbReference type="KEGG" id="ecoc:C3026_21715"/>
<dbReference type="PATRIC" id="fig|1411691.4.peg.2693"/>
<dbReference type="EchoBASE" id="EB1863"/>
<dbReference type="eggNOG" id="COG1283">
    <property type="taxonomic scope" value="Bacteria"/>
</dbReference>
<dbReference type="HOGENOM" id="CLU_025623_2_1_6"/>
<dbReference type="InParanoid" id="P0AF43"/>
<dbReference type="OMA" id="RINSHIC"/>
<dbReference type="OrthoDB" id="5778511at2"/>
<dbReference type="PhylomeDB" id="P0AF43"/>
<dbReference type="BioCyc" id="EcoCyc:EG11919-MONOMER"/>
<dbReference type="BioCyc" id="MetaCyc:EG11919-MONOMER"/>
<dbReference type="PRO" id="PR:P0AF43"/>
<dbReference type="Proteomes" id="UP000000625">
    <property type="component" value="Chromosome"/>
</dbReference>
<dbReference type="GO" id="GO:0005886">
    <property type="term" value="C:plasma membrane"/>
    <property type="evidence" value="ECO:0000314"/>
    <property type="project" value="EcoCyc"/>
</dbReference>
<dbReference type="GO" id="GO:0005315">
    <property type="term" value="F:phosphate transmembrane transporter activity"/>
    <property type="evidence" value="ECO:0000315"/>
    <property type="project" value="EcoCyc"/>
</dbReference>
<dbReference type="GO" id="GO:0005436">
    <property type="term" value="F:sodium:phosphate symporter activity"/>
    <property type="evidence" value="ECO:0007669"/>
    <property type="project" value="InterPro"/>
</dbReference>
<dbReference type="GO" id="GO:0035435">
    <property type="term" value="P:phosphate ion transmembrane transport"/>
    <property type="evidence" value="ECO:0000315"/>
    <property type="project" value="EcoCyc"/>
</dbReference>
<dbReference type="GO" id="GO:0044341">
    <property type="term" value="P:sodium-dependent phosphate transport"/>
    <property type="evidence" value="ECO:0007669"/>
    <property type="project" value="InterPro"/>
</dbReference>
<dbReference type="FunFam" id="1.20.58.220:FF:000003">
    <property type="entry name" value="Inorganic phosphate transporter, sodium-dependent"/>
    <property type="match status" value="1"/>
</dbReference>
<dbReference type="Gene3D" id="1.20.58.220">
    <property type="entry name" value="Phosphate transport system protein phou homolog 2, domain 2"/>
    <property type="match status" value="1"/>
</dbReference>
<dbReference type="InterPro" id="IPR003841">
    <property type="entry name" value="Na/Pi_transpt"/>
</dbReference>
<dbReference type="InterPro" id="IPR004633">
    <property type="entry name" value="NaPi_cotrn-rel/YqeW-like"/>
</dbReference>
<dbReference type="InterPro" id="IPR038078">
    <property type="entry name" value="PhoU-like_sf"/>
</dbReference>
<dbReference type="NCBIfam" id="TIGR01013">
    <property type="entry name" value="2a58"/>
    <property type="match status" value="1"/>
</dbReference>
<dbReference type="NCBIfam" id="NF037997">
    <property type="entry name" value="Na_Pi_symport"/>
    <property type="match status" value="1"/>
</dbReference>
<dbReference type="NCBIfam" id="TIGR00704">
    <property type="entry name" value="NaPi_cotrn_rel"/>
    <property type="match status" value="1"/>
</dbReference>
<dbReference type="PANTHER" id="PTHR10010:SF39">
    <property type="entry name" value="PHOU DOMAIN-CONTAINING PROTEIN"/>
    <property type="match status" value="1"/>
</dbReference>
<dbReference type="PANTHER" id="PTHR10010">
    <property type="entry name" value="SOLUTE CARRIER FAMILY 34 SODIUM PHOSPHATE , MEMBER 2-RELATED"/>
    <property type="match status" value="1"/>
</dbReference>
<dbReference type="Pfam" id="PF02690">
    <property type="entry name" value="Na_Pi_cotrans"/>
    <property type="match status" value="1"/>
</dbReference>
<dbReference type="SUPFAM" id="SSF109755">
    <property type="entry name" value="PhoU-like"/>
    <property type="match status" value="1"/>
</dbReference>
<evidence type="ECO:0000255" key="1"/>
<evidence type="ECO:0000269" key="2">
    <source>
    </source>
</evidence>
<evidence type="ECO:0000305" key="3"/>
<evidence type="ECO:0000305" key="4">
    <source>
    </source>
</evidence>
<organism>
    <name type="scientific">Escherichia coli (strain K12)</name>
    <dbReference type="NCBI Taxonomy" id="83333"/>
    <lineage>
        <taxon>Bacteria</taxon>
        <taxon>Pseudomonadati</taxon>
        <taxon>Pseudomonadota</taxon>
        <taxon>Gammaproteobacteria</taxon>
        <taxon>Enterobacterales</taxon>
        <taxon>Enterobacteriaceae</taxon>
        <taxon>Escherichia</taxon>
    </lineage>
</organism>
<keyword id="KW-0997">Cell inner membrane</keyword>
<keyword id="KW-1003">Cell membrane</keyword>
<keyword id="KW-0472">Membrane</keyword>
<keyword id="KW-0592">Phosphate transport</keyword>
<keyword id="KW-1185">Reference proteome</keyword>
<keyword id="KW-0812">Transmembrane</keyword>
<keyword id="KW-1133">Transmembrane helix</keyword>
<keyword id="KW-0813">Transport</keyword>
<protein>
    <recommendedName>
        <fullName evidence="3">Putative inorganic phosphate export protein YjbB</fullName>
    </recommendedName>
</protein>
<reference key="1">
    <citation type="journal article" date="1993" name="Nucleic Acids Res.">
        <title>Analysis of the Escherichia coli genome. IV. DNA sequence of the region from 89.2 to 92.8 minutes.</title>
        <authorList>
            <person name="Blattner F.R."/>
            <person name="Burland V.D."/>
            <person name="Plunkett G. III"/>
            <person name="Sofia H.J."/>
            <person name="Daniels D.L."/>
        </authorList>
    </citation>
    <scope>NUCLEOTIDE SEQUENCE [LARGE SCALE GENOMIC DNA]</scope>
    <source>
        <strain>K12 / MG1655 / ATCC 47076</strain>
    </source>
</reference>
<reference key="2">
    <citation type="journal article" date="1997" name="Science">
        <title>The complete genome sequence of Escherichia coli K-12.</title>
        <authorList>
            <person name="Blattner F.R."/>
            <person name="Plunkett G. III"/>
            <person name="Bloch C.A."/>
            <person name="Perna N.T."/>
            <person name="Burland V."/>
            <person name="Riley M."/>
            <person name="Collado-Vides J."/>
            <person name="Glasner J.D."/>
            <person name="Rode C.K."/>
            <person name="Mayhew G.F."/>
            <person name="Gregor J."/>
            <person name="Davis N.W."/>
            <person name="Kirkpatrick H.A."/>
            <person name="Goeden M.A."/>
            <person name="Rose D.J."/>
            <person name="Mau B."/>
            <person name="Shao Y."/>
        </authorList>
    </citation>
    <scope>NUCLEOTIDE SEQUENCE [LARGE SCALE GENOMIC DNA]</scope>
    <source>
        <strain>K12 / MG1655 / ATCC 47076</strain>
    </source>
</reference>
<reference key="3">
    <citation type="journal article" date="2006" name="Mol. Syst. Biol.">
        <title>Highly accurate genome sequences of Escherichia coli K-12 strains MG1655 and W3110.</title>
        <authorList>
            <person name="Hayashi K."/>
            <person name="Morooka N."/>
            <person name="Yamamoto Y."/>
            <person name="Fujita K."/>
            <person name="Isono K."/>
            <person name="Choi S."/>
            <person name="Ohtsubo E."/>
            <person name="Baba T."/>
            <person name="Wanner B.L."/>
            <person name="Mori H."/>
            <person name="Horiuchi T."/>
        </authorList>
    </citation>
    <scope>NUCLEOTIDE SEQUENCE [LARGE SCALE GENOMIC DNA]</scope>
    <source>
        <strain>K12 / W3110 / ATCC 27325 / DSM 5911</strain>
    </source>
</reference>
<reference key="4">
    <citation type="journal article" date="2011" name="FEMS Microbiol. Lett.">
        <title>Overproduction of YjbB reduces the level of polyphosphate in Escherichia coli: a hypothetical role of YjbB in phosphate export and polyphosphate accumulation.</title>
        <authorList>
            <person name="Motomura K."/>
            <person name="Hirota R."/>
            <person name="Ohnaka N."/>
            <person name="Okada M."/>
            <person name="Ikeda T."/>
            <person name="Morohoshi T."/>
            <person name="Ohtake H."/>
            <person name="Kuroda A."/>
        </authorList>
    </citation>
    <scope>FUNCTION</scope>
    <scope>OVEREXPRESSION</scope>
    <source>
        <strain>K12 / MG1655 / ATCC 47076</strain>
    </source>
</reference>
<name>YJBB_ECOLI</name>